<comment type="function">
    <text evidence="1">May act as a negative regulator of collagen matrix deposition.</text>
</comment>
<comment type="subcellular location">
    <subcellularLocation>
        <location evidence="1">Secreted</location>
        <location evidence="1">Extracellular space</location>
        <location evidence="1">Extracellular matrix</location>
    </subcellularLocation>
</comment>
<comment type="PTM">
    <text evidence="1">N-glycosylated.</text>
</comment>
<protein>
    <recommendedName>
        <fullName>Collagen triple helix repeat-containing protein 1</fullName>
    </recommendedName>
</protein>
<gene>
    <name type="primary">Cthrc1</name>
</gene>
<accession>Q9D1D6</accession>
<accession>Q3UAP6</accession>
<name>CTHR1_MOUSE</name>
<proteinExistence type="evidence at transcript level"/>
<keyword id="KW-0176">Collagen</keyword>
<keyword id="KW-0272">Extracellular matrix</keyword>
<keyword id="KW-0325">Glycoprotein</keyword>
<keyword id="KW-1185">Reference proteome</keyword>
<keyword id="KW-0964">Secreted</keyword>
<keyword id="KW-0732">Signal</keyword>
<sequence>MHPQGRAAPPQLLLGLFLVLLLLLQLSAPISASENPKVKQKALIRQREVVDLYNGMCLQGPAGVPGRDGSPGANGIPGTPGIPGRDGFKGEKGECLRESFEESWTPNYKQCSWSSLNYGIDLGKIAECTFTKMRSNSALRVLFSGSLRLKCRNACCQRWYFTFNGAECSGPLPIEAIIYLDQGSPELNSTINIHRTSSVEGLCEGIGAGLVDVAIWVGTCSDYPKGDASTGWNSVSRIIIEELPK</sequence>
<organism>
    <name type="scientific">Mus musculus</name>
    <name type="common">Mouse</name>
    <dbReference type="NCBI Taxonomy" id="10090"/>
    <lineage>
        <taxon>Eukaryota</taxon>
        <taxon>Metazoa</taxon>
        <taxon>Chordata</taxon>
        <taxon>Craniata</taxon>
        <taxon>Vertebrata</taxon>
        <taxon>Euteleostomi</taxon>
        <taxon>Mammalia</taxon>
        <taxon>Eutheria</taxon>
        <taxon>Euarchontoglires</taxon>
        <taxon>Glires</taxon>
        <taxon>Rodentia</taxon>
        <taxon>Myomorpha</taxon>
        <taxon>Muroidea</taxon>
        <taxon>Muridae</taxon>
        <taxon>Murinae</taxon>
        <taxon>Mus</taxon>
        <taxon>Mus</taxon>
    </lineage>
</organism>
<evidence type="ECO:0000250" key="1"/>
<evidence type="ECO:0000255" key="2"/>
<evidence type="ECO:0000256" key="3">
    <source>
        <dbReference type="SAM" id="MobiDB-lite"/>
    </source>
</evidence>
<evidence type="ECO:0000305" key="4"/>
<dbReference type="EMBL" id="AK003674">
    <property type="protein sequence ID" value="BAB22930.1"/>
    <property type="molecule type" value="mRNA"/>
</dbReference>
<dbReference type="EMBL" id="AK151282">
    <property type="protein sequence ID" value="BAE30268.1"/>
    <property type="molecule type" value="mRNA"/>
</dbReference>
<dbReference type="EMBL" id="AC164883">
    <property type="status" value="NOT_ANNOTATED_CDS"/>
    <property type="molecule type" value="Genomic_DNA"/>
</dbReference>
<dbReference type="EMBL" id="CH466541">
    <property type="protein sequence ID" value="EDL08785.1"/>
    <property type="molecule type" value="Genomic_DNA"/>
</dbReference>
<dbReference type="CCDS" id="CCDS27442.1"/>
<dbReference type="RefSeq" id="NP_081054.1">
    <property type="nucleotide sequence ID" value="NM_026778.3"/>
</dbReference>
<dbReference type="FunCoup" id="Q9D1D6">
    <property type="interactions" value="167"/>
</dbReference>
<dbReference type="STRING" id="10090.ENSMUSP00000070018"/>
<dbReference type="GlyCosmos" id="Q9D1D6">
    <property type="glycosylation" value="1 site, No reported glycans"/>
</dbReference>
<dbReference type="GlyGen" id="Q9D1D6">
    <property type="glycosylation" value="2 sites"/>
</dbReference>
<dbReference type="PhosphoSitePlus" id="Q9D1D6"/>
<dbReference type="jPOST" id="Q9D1D6"/>
<dbReference type="PaxDb" id="10090-ENSMUSP00000070018"/>
<dbReference type="ProteomicsDB" id="285217"/>
<dbReference type="Pumba" id="Q9D1D6"/>
<dbReference type="Antibodypedia" id="26375">
    <property type="antibodies" value="323 antibodies from 35 providers"/>
</dbReference>
<dbReference type="DNASU" id="68588"/>
<dbReference type="Ensembl" id="ENSMUST00000067072.5">
    <property type="protein sequence ID" value="ENSMUSP00000070018.4"/>
    <property type="gene ID" value="ENSMUSG00000054196.8"/>
</dbReference>
<dbReference type="GeneID" id="68588"/>
<dbReference type="KEGG" id="mmu:68588"/>
<dbReference type="UCSC" id="uc007voa.1">
    <property type="organism name" value="mouse"/>
</dbReference>
<dbReference type="AGR" id="MGI:1915838"/>
<dbReference type="CTD" id="115908"/>
<dbReference type="MGI" id="MGI:1915838">
    <property type="gene designation" value="Cthrc1"/>
</dbReference>
<dbReference type="VEuPathDB" id="HostDB:ENSMUSG00000054196"/>
<dbReference type="eggNOG" id="ENOG502QSJD">
    <property type="taxonomic scope" value="Eukaryota"/>
</dbReference>
<dbReference type="GeneTree" id="ENSGT00390000018094"/>
<dbReference type="HOGENOM" id="CLU_099891_0_0_1"/>
<dbReference type="InParanoid" id="Q9D1D6"/>
<dbReference type="OMA" id="CADYPKG"/>
<dbReference type="OrthoDB" id="5985978at2759"/>
<dbReference type="PhylomeDB" id="Q9D1D6"/>
<dbReference type="TreeFam" id="TF328705"/>
<dbReference type="BioGRID-ORCS" id="68588">
    <property type="hits" value="3 hits in 78 CRISPR screens"/>
</dbReference>
<dbReference type="PRO" id="PR:Q9D1D6"/>
<dbReference type="Proteomes" id="UP000000589">
    <property type="component" value="Chromosome 15"/>
</dbReference>
<dbReference type="RNAct" id="Q9D1D6">
    <property type="molecule type" value="protein"/>
</dbReference>
<dbReference type="Bgee" id="ENSMUSG00000054196">
    <property type="expression patterns" value="Expressed in endochondral bone and 189 other cell types or tissues"/>
</dbReference>
<dbReference type="ExpressionAtlas" id="Q9D1D6">
    <property type="expression patterns" value="baseline and differential"/>
</dbReference>
<dbReference type="GO" id="GO:0005581">
    <property type="term" value="C:collagen trimer"/>
    <property type="evidence" value="ECO:0007669"/>
    <property type="project" value="UniProtKB-KW"/>
</dbReference>
<dbReference type="GO" id="GO:0031012">
    <property type="term" value="C:extracellular matrix"/>
    <property type="evidence" value="ECO:0000266"/>
    <property type="project" value="MGI"/>
</dbReference>
<dbReference type="GO" id="GO:0005615">
    <property type="term" value="C:extracellular space"/>
    <property type="evidence" value="ECO:0007005"/>
    <property type="project" value="BHF-UCL"/>
</dbReference>
<dbReference type="GO" id="GO:0016528">
    <property type="term" value="C:sarcoplasm"/>
    <property type="evidence" value="ECO:0000314"/>
    <property type="project" value="MGI"/>
</dbReference>
<dbReference type="GO" id="GO:0005109">
    <property type="term" value="F:frizzled binding"/>
    <property type="evidence" value="ECO:0000353"/>
    <property type="project" value="MGI"/>
</dbReference>
<dbReference type="GO" id="GO:0017147">
    <property type="term" value="F:Wnt-protein binding"/>
    <property type="evidence" value="ECO:0000353"/>
    <property type="project" value="MGI"/>
</dbReference>
<dbReference type="GO" id="GO:0016477">
    <property type="term" value="P:cell migration"/>
    <property type="evidence" value="ECO:0000266"/>
    <property type="project" value="MGI"/>
</dbReference>
<dbReference type="GO" id="GO:0090103">
    <property type="term" value="P:cochlea morphogenesis"/>
    <property type="evidence" value="ECO:0000316"/>
    <property type="project" value="MGI"/>
</dbReference>
<dbReference type="GO" id="GO:0090177">
    <property type="term" value="P:establishment of planar polarity involved in neural tube closure"/>
    <property type="evidence" value="ECO:0000316"/>
    <property type="project" value="MGI"/>
</dbReference>
<dbReference type="GO" id="GO:0060122">
    <property type="term" value="P:inner ear receptor cell stereocilium organization"/>
    <property type="evidence" value="ECO:0000316"/>
    <property type="project" value="MGI"/>
</dbReference>
<dbReference type="GO" id="GO:0090090">
    <property type="term" value="P:negative regulation of canonical Wnt signaling pathway"/>
    <property type="evidence" value="ECO:0000314"/>
    <property type="project" value="MGI"/>
</dbReference>
<dbReference type="GO" id="GO:0043932">
    <property type="term" value="P:ossification involved in bone remodeling"/>
    <property type="evidence" value="ECO:0000315"/>
    <property type="project" value="MGI"/>
</dbReference>
<dbReference type="GO" id="GO:0001649">
    <property type="term" value="P:osteoblast differentiation"/>
    <property type="evidence" value="ECO:0000315"/>
    <property type="project" value="MGI"/>
</dbReference>
<dbReference type="GO" id="GO:0033687">
    <property type="term" value="P:osteoblast proliferation"/>
    <property type="evidence" value="ECO:0000315"/>
    <property type="project" value="MGI"/>
</dbReference>
<dbReference type="GO" id="GO:0045669">
    <property type="term" value="P:positive regulation of osteoblast differentiation"/>
    <property type="evidence" value="ECO:0000315"/>
    <property type="project" value="MGI"/>
</dbReference>
<dbReference type="GO" id="GO:0033690">
    <property type="term" value="P:positive regulation of osteoblast proliferation"/>
    <property type="evidence" value="ECO:0000315"/>
    <property type="project" value="MGI"/>
</dbReference>
<dbReference type="GO" id="GO:0060071">
    <property type="term" value="P:Wnt signaling pathway, planar cell polarity pathway"/>
    <property type="evidence" value="ECO:0000315"/>
    <property type="project" value="MGI"/>
</dbReference>
<feature type="signal peptide" evidence="2">
    <location>
        <begin position="1"/>
        <end position="32"/>
    </location>
</feature>
<feature type="chain" id="PRO_0000021039" description="Collagen triple helix repeat-containing protein 1">
    <location>
        <begin position="33"/>
        <end position="245"/>
    </location>
</feature>
<feature type="domain" description="Collagen-like">
    <location>
        <begin position="59"/>
        <end position="92"/>
    </location>
</feature>
<feature type="region of interest" description="Disordered" evidence="3">
    <location>
        <begin position="64"/>
        <end position="87"/>
    </location>
</feature>
<feature type="glycosylation site" description="N-linked (GlcNAc...) asparagine" evidence="2">
    <location>
        <position position="188"/>
    </location>
</feature>
<feature type="sequence conflict" description="In Ref. 1; BAB22930." evidence="4" ref="1">
    <original>K</original>
    <variation>Q</variation>
    <location>
        <position position="41"/>
    </location>
</feature>
<reference key="1">
    <citation type="journal article" date="2005" name="Science">
        <title>The transcriptional landscape of the mammalian genome.</title>
        <authorList>
            <person name="Carninci P."/>
            <person name="Kasukawa T."/>
            <person name="Katayama S."/>
            <person name="Gough J."/>
            <person name="Frith M.C."/>
            <person name="Maeda N."/>
            <person name="Oyama R."/>
            <person name="Ravasi T."/>
            <person name="Lenhard B."/>
            <person name="Wells C."/>
            <person name="Kodzius R."/>
            <person name="Shimokawa K."/>
            <person name="Bajic V.B."/>
            <person name="Brenner S.E."/>
            <person name="Batalov S."/>
            <person name="Forrest A.R."/>
            <person name="Zavolan M."/>
            <person name="Davis M.J."/>
            <person name="Wilming L.G."/>
            <person name="Aidinis V."/>
            <person name="Allen J.E."/>
            <person name="Ambesi-Impiombato A."/>
            <person name="Apweiler R."/>
            <person name="Aturaliya R.N."/>
            <person name="Bailey T.L."/>
            <person name="Bansal M."/>
            <person name="Baxter L."/>
            <person name="Beisel K.W."/>
            <person name="Bersano T."/>
            <person name="Bono H."/>
            <person name="Chalk A.M."/>
            <person name="Chiu K.P."/>
            <person name="Choudhary V."/>
            <person name="Christoffels A."/>
            <person name="Clutterbuck D.R."/>
            <person name="Crowe M.L."/>
            <person name="Dalla E."/>
            <person name="Dalrymple B.P."/>
            <person name="de Bono B."/>
            <person name="Della Gatta G."/>
            <person name="di Bernardo D."/>
            <person name="Down T."/>
            <person name="Engstrom P."/>
            <person name="Fagiolini M."/>
            <person name="Faulkner G."/>
            <person name="Fletcher C.F."/>
            <person name="Fukushima T."/>
            <person name="Furuno M."/>
            <person name="Futaki S."/>
            <person name="Gariboldi M."/>
            <person name="Georgii-Hemming P."/>
            <person name="Gingeras T.R."/>
            <person name="Gojobori T."/>
            <person name="Green R.E."/>
            <person name="Gustincich S."/>
            <person name="Harbers M."/>
            <person name="Hayashi Y."/>
            <person name="Hensch T.K."/>
            <person name="Hirokawa N."/>
            <person name="Hill D."/>
            <person name="Huminiecki L."/>
            <person name="Iacono M."/>
            <person name="Ikeo K."/>
            <person name="Iwama A."/>
            <person name="Ishikawa T."/>
            <person name="Jakt M."/>
            <person name="Kanapin A."/>
            <person name="Katoh M."/>
            <person name="Kawasawa Y."/>
            <person name="Kelso J."/>
            <person name="Kitamura H."/>
            <person name="Kitano H."/>
            <person name="Kollias G."/>
            <person name="Krishnan S.P."/>
            <person name="Kruger A."/>
            <person name="Kummerfeld S.K."/>
            <person name="Kurochkin I.V."/>
            <person name="Lareau L.F."/>
            <person name="Lazarevic D."/>
            <person name="Lipovich L."/>
            <person name="Liu J."/>
            <person name="Liuni S."/>
            <person name="McWilliam S."/>
            <person name="Madan Babu M."/>
            <person name="Madera M."/>
            <person name="Marchionni L."/>
            <person name="Matsuda H."/>
            <person name="Matsuzawa S."/>
            <person name="Miki H."/>
            <person name="Mignone F."/>
            <person name="Miyake S."/>
            <person name="Morris K."/>
            <person name="Mottagui-Tabar S."/>
            <person name="Mulder N."/>
            <person name="Nakano N."/>
            <person name="Nakauchi H."/>
            <person name="Ng P."/>
            <person name="Nilsson R."/>
            <person name="Nishiguchi S."/>
            <person name="Nishikawa S."/>
            <person name="Nori F."/>
            <person name="Ohara O."/>
            <person name="Okazaki Y."/>
            <person name="Orlando V."/>
            <person name="Pang K.C."/>
            <person name="Pavan W.J."/>
            <person name="Pavesi G."/>
            <person name="Pesole G."/>
            <person name="Petrovsky N."/>
            <person name="Piazza S."/>
            <person name="Reed J."/>
            <person name="Reid J.F."/>
            <person name="Ring B.Z."/>
            <person name="Ringwald M."/>
            <person name="Rost B."/>
            <person name="Ruan Y."/>
            <person name="Salzberg S.L."/>
            <person name="Sandelin A."/>
            <person name="Schneider C."/>
            <person name="Schoenbach C."/>
            <person name="Sekiguchi K."/>
            <person name="Semple C.A."/>
            <person name="Seno S."/>
            <person name="Sessa L."/>
            <person name="Sheng Y."/>
            <person name="Shibata Y."/>
            <person name="Shimada H."/>
            <person name="Shimada K."/>
            <person name="Silva D."/>
            <person name="Sinclair B."/>
            <person name="Sperling S."/>
            <person name="Stupka E."/>
            <person name="Sugiura K."/>
            <person name="Sultana R."/>
            <person name="Takenaka Y."/>
            <person name="Taki K."/>
            <person name="Tammoja K."/>
            <person name="Tan S.L."/>
            <person name="Tang S."/>
            <person name="Taylor M.S."/>
            <person name="Tegner J."/>
            <person name="Teichmann S.A."/>
            <person name="Ueda H.R."/>
            <person name="van Nimwegen E."/>
            <person name="Verardo R."/>
            <person name="Wei C.L."/>
            <person name="Yagi K."/>
            <person name="Yamanishi H."/>
            <person name="Zabarovsky E."/>
            <person name="Zhu S."/>
            <person name="Zimmer A."/>
            <person name="Hide W."/>
            <person name="Bult C."/>
            <person name="Grimmond S.M."/>
            <person name="Teasdale R.D."/>
            <person name="Liu E.T."/>
            <person name="Brusic V."/>
            <person name="Quackenbush J."/>
            <person name="Wahlestedt C."/>
            <person name="Mattick J.S."/>
            <person name="Hume D.A."/>
            <person name="Kai C."/>
            <person name="Sasaki D."/>
            <person name="Tomaru Y."/>
            <person name="Fukuda S."/>
            <person name="Kanamori-Katayama M."/>
            <person name="Suzuki M."/>
            <person name="Aoki J."/>
            <person name="Arakawa T."/>
            <person name="Iida J."/>
            <person name="Imamura K."/>
            <person name="Itoh M."/>
            <person name="Kato T."/>
            <person name="Kawaji H."/>
            <person name="Kawagashira N."/>
            <person name="Kawashima T."/>
            <person name="Kojima M."/>
            <person name="Kondo S."/>
            <person name="Konno H."/>
            <person name="Nakano K."/>
            <person name="Ninomiya N."/>
            <person name="Nishio T."/>
            <person name="Okada M."/>
            <person name="Plessy C."/>
            <person name="Shibata K."/>
            <person name="Shiraki T."/>
            <person name="Suzuki S."/>
            <person name="Tagami M."/>
            <person name="Waki K."/>
            <person name="Watahiki A."/>
            <person name="Okamura-Oho Y."/>
            <person name="Suzuki H."/>
            <person name="Kawai J."/>
            <person name="Hayashizaki Y."/>
        </authorList>
    </citation>
    <scope>NUCLEOTIDE SEQUENCE [LARGE SCALE MRNA]</scope>
    <source>
        <strain>C57BL/6J</strain>
        <tissue>Bone marrow</tissue>
        <tissue>Embryo</tissue>
    </source>
</reference>
<reference key="2">
    <citation type="journal article" date="2009" name="PLoS Biol.">
        <title>Lineage-specific biology revealed by a finished genome assembly of the mouse.</title>
        <authorList>
            <person name="Church D.M."/>
            <person name="Goodstadt L."/>
            <person name="Hillier L.W."/>
            <person name="Zody M.C."/>
            <person name="Goldstein S."/>
            <person name="She X."/>
            <person name="Bult C.J."/>
            <person name="Agarwala R."/>
            <person name="Cherry J.L."/>
            <person name="DiCuccio M."/>
            <person name="Hlavina W."/>
            <person name="Kapustin Y."/>
            <person name="Meric P."/>
            <person name="Maglott D."/>
            <person name="Birtle Z."/>
            <person name="Marques A.C."/>
            <person name="Graves T."/>
            <person name="Zhou S."/>
            <person name="Teague B."/>
            <person name="Potamousis K."/>
            <person name="Churas C."/>
            <person name="Place M."/>
            <person name="Herschleb J."/>
            <person name="Runnheim R."/>
            <person name="Forrest D."/>
            <person name="Amos-Landgraf J."/>
            <person name="Schwartz D.C."/>
            <person name="Cheng Z."/>
            <person name="Lindblad-Toh K."/>
            <person name="Eichler E.E."/>
            <person name="Ponting C.P."/>
        </authorList>
    </citation>
    <scope>NUCLEOTIDE SEQUENCE [LARGE SCALE GENOMIC DNA]</scope>
    <source>
        <strain>C57BL/6J</strain>
    </source>
</reference>
<reference key="3">
    <citation type="submission" date="2005-07" db="EMBL/GenBank/DDBJ databases">
        <authorList>
            <person name="Mural R.J."/>
            <person name="Adams M.D."/>
            <person name="Myers E.W."/>
            <person name="Smith H.O."/>
            <person name="Venter J.C."/>
        </authorList>
    </citation>
    <scope>NUCLEOTIDE SEQUENCE [LARGE SCALE GENOMIC DNA]</scope>
</reference>